<keyword id="KW-0130">Cell adhesion</keyword>
<keyword id="KW-1003">Cell membrane</keyword>
<keyword id="KW-0903">Direct protein sequencing</keyword>
<keyword id="KW-1015">Disulfide bond</keyword>
<keyword id="KW-0325">Glycoprotein</keyword>
<keyword id="KW-0430">Lectin</keyword>
<keyword id="KW-0472">Membrane</keyword>
<keyword id="KW-1185">Reference proteome</keyword>
<keyword id="KW-0732">Signal</keyword>
<keyword id="KW-0812">Transmembrane</keyword>
<keyword id="KW-1133">Transmembrane helix</keyword>
<accession>P32022</accession>
<accession>A0A175JP03</accession>
<accession>B1N3C7</accession>
<sequence length="1293" mass="145253">MKLLLLNILLLCCLADKLNEFSADIDYYDLGIMSRGKNAGSWYHSYEHQYDVFYYLAMQPWRHFVWTTCTTTDGNKECYKYTINEDHNVKVEDINKTDIKQDFCQKEYAYPIEKYEVDWDNVPVDEQRIESVDINGKTCFKYAAKRPLAYVYLNTKMTYATKTEAYDVCRMDFIGGRSITFRSFNTENKAFIDQYNTNTTSKCLLKVYDNNVNTHLAIIFGITDSTVIKSLQENLSLLSQLKTVKGVTLYYLKDDTYFTVNITLDQLKYDTLVKYTAGTGQVDPLINIAKNDLATKVADKSKDKNANDKIKRGTMIVLMDTALGSEFNAETEFDRKNISVHTVVLNRNKDPKITRSALRLVSLGPHYHEFTGNDEVNATITALFKGIRANLTERCDRDKCSGFCDAMNRCTCPMCCENDCFYTSCDVETGSCIPWPKAKPKAKKECPATCVGSYECKDLEGCVVTKYNDTCQPKVKCMVPYCDNDKNLTEVCKQKANCEADQKPSSDGYCWSYTCDQTTGFCKKDKRGKEMCTGKTNNCQEYVCDSEQRCSVRDKVCVKTSPYIEMSCYVAKCNLNTGMCENRLSCDTYSSCGGDSTGSVCKCDSTTGNKCQCNKVKNGNYCNSKNHEICDYTGTTPQCKVSNCTEDLVRDGCLIKRCNETSKTTYWENVDCSNTKIEFAKDDKSETMCKQYYSTTCLNGKCVVQAVGDVSNVGCGYCSMGTDNIITYHDDCNSRKSQCGNFNGKCIKGNDNSYSCVFEKDKTSSKSDNDICAECSSLTCPADTTYRTYTYDSKTGTCKATVQPTPACSVCESGKFVEKCKDQKLERKVTLEDGKEYKYNIPKDCVNEQCIPRTYIDCLGNDDNFKSIYNFYLPCQAYVTATYHYSSLFNLTSYKLHLPQSEEFMKEADKEAYCTYEITTRECKTCSLIETREKVQEVDLCAEETKNGGVPFKCKNNNCIIDPNFDCQPIECKIQEIVITEKDGIKTTTCKNTTKTTCDTNNKRIEDARKAFIEGKEGIEQVECASTVCQNDNSCPIITDVEKCNQNTEVDYGCKAMTGECDGTTYLCKFVQLTDDPSLDSEHFRTKSGVELNNACLKYKCVESKGSDGKITHKWEIDTERSNANPKPRNPCETATCNQTTGETIYTKKTCTVSEEFPTITPNQGRCFYCQCSYLDGSSVLTMYGETDKEYYDLDACGNCRVWNQTDRTQQLNNHTECILAGEINNVGAIAAATTVAVVVVAVVVALIVVSIGLFKTYQLVSSAMKNAITITNENAEYVGADNEATNAATFNG</sequence>
<feature type="signal peptide" evidence="2">
    <location>
        <begin position="1"/>
        <end position="15"/>
    </location>
</feature>
<feature type="chain" id="PRO_0000087491" description="Galactose/N-acetyl-D-galactosamine lectin heavy subunit 1" evidence="2">
    <location>
        <begin position="16"/>
        <end position="1293"/>
    </location>
</feature>
<feature type="topological domain" description="Extracellular" evidence="9">
    <location>
        <begin position="16"/>
        <end position="1234"/>
    </location>
</feature>
<feature type="transmembrane region" description="Helical" evidence="2">
    <location>
        <begin position="1235"/>
        <end position="1255"/>
    </location>
</feature>
<feature type="topological domain" description="Cytoplasmic" evidence="9">
    <location>
        <begin position="1256"/>
        <end position="1293"/>
    </location>
</feature>
<feature type="glycosylation site" description="N-linked (GlcNAc...) asparagine" evidence="3">
    <location>
        <position position="95"/>
    </location>
</feature>
<feature type="glycosylation site" description="N-linked (GlcNAc...) asparagine" evidence="3">
    <location>
        <position position="198"/>
    </location>
</feature>
<feature type="glycosylation site" description="N-linked (GlcNAc...) asparagine" evidence="3">
    <location>
        <position position="234"/>
    </location>
</feature>
<feature type="glycosylation site" description="N-linked (GlcNAc...) asparagine" evidence="3">
    <location>
        <position position="261"/>
    </location>
</feature>
<feature type="glycosylation site" description="N-linked (GlcNAc...) asparagine" evidence="3">
    <location>
        <position position="337"/>
    </location>
</feature>
<feature type="glycosylation site" description="N-linked (GlcNAc...) asparagine" evidence="3">
    <location>
        <position position="377"/>
    </location>
</feature>
<feature type="glycosylation site" description="N-linked (GlcNAc...) asparagine" evidence="3">
    <location>
        <position position="390"/>
    </location>
</feature>
<feature type="glycosylation site" description="N-linked (GlcNAc...) asparagine" evidence="3">
    <location>
        <position position="468"/>
    </location>
</feature>
<feature type="glycosylation site" description="N-linked (GlcNAc...) asparagine" evidence="3">
    <location>
        <position position="487"/>
    </location>
</feature>
<feature type="glycosylation site" description="N-linked (GlcNAc...) asparagine" evidence="3">
    <location>
        <position position="643"/>
    </location>
</feature>
<feature type="glycosylation site" description="N-linked (GlcNAc...) asparagine" evidence="3">
    <location>
        <position position="659"/>
    </location>
</feature>
<feature type="glycosylation site" description="N-linked (GlcNAc...) asparagine" evidence="3">
    <location>
        <position position="890"/>
    </location>
</feature>
<feature type="glycosylation site" description="N-linked (GlcNAc...) asparagine" evidence="3">
    <location>
        <position position="992"/>
    </location>
</feature>
<feature type="glycosylation site" description="N-linked (GlcNAc...) asparagine" evidence="3">
    <location>
        <position position="1138"/>
    </location>
</feature>
<feature type="glycosylation site" description="N-linked (GlcNAc...) asparagine" evidence="3">
    <location>
        <position position="1204"/>
    </location>
</feature>
<feature type="glycosylation site" description="N-linked (GlcNAc...) asparagine" evidence="3">
    <location>
        <position position="1214"/>
    </location>
</feature>
<feature type="sequence conflict" description="In Ref. 1; M59850." evidence="9" ref="1">
    <original>E</original>
    <variation>T</variation>
    <location>
        <position position="47"/>
    </location>
</feature>
<feature type="sequence conflict" description="In Ref. 1; M59850." evidence="9" ref="1">
    <original>TTTDGNK</original>
    <variation>DKNDNT</variation>
    <location>
        <begin position="70"/>
        <end position="76"/>
    </location>
</feature>
<feature type="sequence conflict" description="In Ref. 1; M59850." evidence="9" ref="1">
    <original>D</original>
    <variation>N</variation>
    <location>
        <position position="98"/>
    </location>
</feature>
<feature type="sequence conflict" description="In Ref. 1; M59850." evidence="9" ref="1">
    <original>K</original>
    <variation>N</variation>
    <location>
        <position position="206"/>
    </location>
</feature>
<feature type="sequence conflict" description="In Ref. 1; M59850." evidence="9" ref="1">
    <original>K</original>
    <variation>R</variation>
    <location>
        <position position="457"/>
    </location>
</feature>
<feature type="sequence conflict" description="In Ref. 1; M59850." evidence="9" ref="1">
    <original>N</original>
    <variation>S</variation>
    <location>
        <position position="750"/>
    </location>
</feature>
<feature type="sequence conflict" description="In Ref. 1; M59850." evidence="9" ref="1">
    <original>D</original>
    <variation>N</variation>
    <location>
        <position position="833"/>
    </location>
</feature>
<feature type="sequence conflict" description="In Ref. 1; M59850." evidence="9" ref="1">
    <original>N</original>
    <variation>T</variation>
    <location>
        <position position="840"/>
    </location>
</feature>
<feature type="sequence conflict" description="In Ref. 1; M59850." evidence="9" ref="1">
    <original>T</original>
    <variation>A</variation>
    <location>
        <position position="996"/>
    </location>
</feature>
<feature type="sequence conflict" description="In Ref. 1; M59850." evidence="9" ref="1">
    <location>
        <position position="1155"/>
    </location>
</feature>
<feature type="sequence conflict" description="In Ref. 1; M59850." evidence="9" ref="1">
    <original>VVV</original>
    <variation>AVI</variation>
    <location>
        <begin position="1238"/>
        <end position="1240"/>
    </location>
</feature>
<dbReference type="EMBL" id="M59850">
    <property type="status" value="NOT_ANNOTATED_CDS"/>
    <property type="molecule type" value="Genomic_DNA"/>
</dbReference>
<dbReference type="EMBL" id="DS571212">
    <property type="protein sequence ID" value="EDS89531.1"/>
    <property type="molecule type" value="Genomic_DNA"/>
</dbReference>
<dbReference type="RefSeq" id="XP_001913693.1">
    <property type="nucleotide sequence ID" value="XM_001913658.1"/>
</dbReference>
<dbReference type="ABCD" id="P32022">
    <property type="antibodies" value="4 sequenced antibodies"/>
</dbReference>
<dbReference type="EnsemblProtists" id="GAT95123">
    <property type="protein sequence ID" value="GAT95123"/>
    <property type="gene ID" value="CL6EHI_133900"/>
</dbReference>
<dbReference type="EnsemblProtists" id="rna_EHI_133900-1">
    <property type="protein sequence ID" value="rna_EHI_133900-1"/>
    <property type="gene ID" value="EHI_133900"/>
</dbReference>
<dbReference type="GeneID" id="6219658"/>
<dbReference type="KEGG" id="ehi:EHI_133900"/>
<dbReference type="VEuPathDB" id="AmoebaDB:EHI5A_097310"/>
<dbReference type="VEuPathDB" id="AmoebaDB:EHI5A_223980"/>
<dbReference type="VEuPathDB" id="AmoebaDB:EHI5A_267920"/>
<dbReference type="VEuPathDB" id="AmoebaDB:EHI7A_034930"/>
<dbReference type="VEuPathDB" id="AmoebaDB:EHI8A_064380"/>
<dbReference type="VEuPathDB" id="AmoebaDB:EHI_133900"/>
<dbReference type="VEuPathDB" id="AmoebaDB:KM1_116600"/>
<dbReference type="VEuPathDB" id="AmoebaDB:KM1_116910"/>
<dbReference type="VEuPathDB" id="AmoebaDB:KM1_117020"/>
<dbReference type="VEuPathDB" id="AmoebaDB:KM1_117130"/>
<dbReference type="VEuPathDB" id="AmoebaDB:KM1_117340"/>
<dbReference type="HOGENOM" id="CLU_262082_0_0_1"/>
<dbReference type="InParanoid" id="P32022"/>
<dbReference type="OMA" id="TERCDRN"/>
<dbReference type="OrthoDB" id="28608at2759"/>
<dbReference type="Proteomes" id="UP000001926">
    <property type="component" value="Partially assembled WGS sequence"/>
</dbReference>
<dbReference type="GO" id="GO:0005886">
    <property type="term" value="C:plasma membrane"/>
    <property type="evidence" value="ECO:0007669"/>
    <property type="project" value="UniProtKB-SubCell"/>
</dbReference>
<dbReference type="GO" id="GO:0030246">
    <property type="term" value="F:carbohydrate binding"/>
    <property type="evidence" value="ECO:0007669"/>
    <property type="project" value="UniProtKB-KW"/>
</dbReference>
<dbReference type="GO" id="GO:0007155">
    <property type="term" value="P:cell adhesion"/>
    <property type="evidence" value="ECO:0007669"/>
    <property type="project" value="UniProtKB-KW"/>
</dbReference>
<comment type="function">
    <text evidence="6">Lectin which binds galactose and N-acetyl-D-galactosamine of host glycoproteins and thus mediates adhesion to host cells (Probable). Mediates adherence to host colonic mucins, an essential step for pathogenic tissue invasion (Probable).</text>
</comment>
<comment type="subunit">
    <text evidence="1">Heterodimer composed of a 170 kDa heavy subunit (hgl) and a 31/35 kDa light subunit (lgl); disulfide-linked.</text>
</comment>
<comment type="subcellular location">
    <subcellularLocation>
        <location evidence="1">Cell membrane</location>
        <topology evidence="1">Single-pass type I membrane protein</topology>
    </subcellularLocation>
</comment>
<comment type="developmental stage">
    <text evidence="4 5">Expressed in trophozoites.</text>
</comment>
<comment type="PTM">
    <text evidence="4">N-glycosylated.</text>
</comment>
<protein>
    <recommendedName>
        <fullName evidence="9">Galactose/N-acetyl-D-galactosamine lectin heavy subunit 1</fullName>
        <shortName evidence="9">Gal/GalNAc lectin heavy subunit 1</shortName>
    </recommendedName>
    <alternativeName>
        <fullName evidence="7">Galactose-inhibitable lectin 170 kDa subunit</fullName>
    </alternativeName>
    <alternativeName>
        <fullName evidence="8">N-acetyl D-galactosamine-specific lectin</fullName>
    </alternativeName>
</protein>
<reference evidence="11" key="1">
    <citation type="journal article" date="1991" name="Proc. Natl. Acad. Sci. U.S.A.">
        <title>Sequence of a cysteine-rich galactose-specific lectin of Entamoeba histolytica.</title>
        <authorList>
            <person name="Mann B.J."/>
            <person name="Torian B.E."/>
            <person name="Vedvick T.S."/>
            <person name="Petri W.A. Jr."/>
        </authorList>
    </citation>
    <scope>NUCLEOTIDE SEQUENCE [GENOMIC DNA / MRNA]</scope>
    <scope>PARTIAL PROTEIN SEQUENCE</scope>
    <scope>DEVELOPMENTAL STAGE</scope>
    <scope>GLYCOSYLATION</scope>
</reference>
<reference evidence="10" key="2">
    <citation type="journal article" date="2005" name="Nature">
        <title>The genome of the protist parasite Entamoeba histolytica.</title>
        <authorList>
            <person name="Loftus B.J."/>
            <person name="Anderson I."/>
            <person name="Davies R."/>
            <person name="Alsmark U.C."/>
            <person name="Samuelson J."/>
            <person name="Amedeo P."/>
            <person name="Roncaglia P."/>
            <person name="Berriman M."/>
            <person name="Hirt R.P."/>
            <person name="Mann B.J."/>
            <person name="Nozaki T."/>
            <person name="Suh B."/>
            <person name="Pop M."/>
            <person name="Duchene M."/>
            <person name="Ackers J."/>
            <person name="Tannich E."/>
            <person name="Leippe M."/>
            <person name="Hofer M."/>
            <person name="Bruchhaus I."/>
            <person name="Willhoeft U."/>
            <person name="Bhattacharya A."/>
            <person name="Chillingworth T."/>
            <person name="Churcher C.M."/>
            <person name="Hance Z."/>
            <person name="Harris B."/>
            <person name="Harris D."/>
            <person name="Jagels K."/>
            <person name="Moule S."/>
            <person name="Mungall K.L."/>
            <person name="Ormond D."/>
            <person name="Squares R."/>
            <person name="Whitehead S."/>
            <person name="Quail M.A."/>
            <person name="Rabbinowitsch E."/>
            <person name="Norbertczak H."/>
            <person name="Price C."/>
            <person name="Wang Z."/>
            <person name="Guillen N."/>
            <person name="Gilchrist C."/>
            <person name="Stroup S.E."/>
            <person name="Bhattacharya S."/>
            <person name="Lohia A."/>
            <person name="Foster P.G."/>
            <person name="Sicheritz-Ponten T."/>
            <person name="Weber C."/>
            <person name="Singh U."/>
            <person name="Mukherjee C."/>
            <person name="El-Sayed N.M.A."/>
            <person name="Petri W.A."/>
            <person name="Clark C.G."/>
            <person name="Embley T.M."/>
            <person name="Barrell B.G."/>
            <person name="Fraser C.M."/>
            <person name="Hall N."/>
        </authorList>
    </citation>
    <scope>NUCLEOTIDE SEQUENCE [LARGE SCALE GENOMIC DNA]</scope>
    <source>
        <strain evidence="10">ATCC 30459 / HM-1:IMSS / ABRM</strain>
    </source>
</reference>
<reference key="3">
    <citation type="journal article" date="2010" name="PLoS Negl. Trop. Dis.">
        <title>New assembly, reannotation and analysis of the Entamoeba histolytica genome reveal new genomic features and protein content information.</title>
        <authorList>
            <person name="Lorenzi H.A."/>
            <person name="Puiu D."/>
            <person name="Miller J.R."/>
            <person name="Brinkac L.M."/>
            <person name="Amedeo P."/>
            <person name="Hall N."/>
            <person name="Caler E.V."/>
        </authorList>
    </citation>
    <scope>GENOME REANNOTATION</scope>
    <source>
        <strain>ATCC 30459 / HM-1:IMSS / ABRM</strain>
    </source>
</reference>
<reference key="4">
    <citation type="journal article" date="1996" name="Mol. Microbiol.">
        <title>Physical mapping and expression of gene families encoding the N-acetyl D-galactosamine adherence lectin of Entamoeba histolytica.</title>
        <authorList>
            <person name="Ramakrishnan G."/>
            <person name="Ragland B.D."/>
            <person name="Purdy J.E."/>
            <person name="Mann B.J."/>
        </authorList>
    </citation>
    <scope>NOMENCLATURE</scope>
    <scope>DEVELOPMENTAL STAGE</scope>
</reference>
<reference key="5">
    <citation type="journal article" date="2002" name="Annu. Rev. Microbiol.">
        <title>The bittersweet interface of parasite and host: lectin-carbohydrate interactions during human invasion by the parasite Entamoeba histolytica.</title>
        <authorList>
            <person name="Petri W.A. Jr."/>
            <person name="Haque R."/>
            <person name="Mann B.J."/>
        </authorList>
    </citation>
    <scope>REVIEW</scope>
</reference>
<organism evidence="10">
    <name type="scientific">Entamoeba histolytica (strain ATCC 30459 / HM-1:IMSS / ABRM)</name>
    <dbReference type="NCBI Taxonomy" id="294381"/>
    <lineage>
        <taxon>Eukaryota</taxon>
        <taxon>Amoebozoa</taxon>
        <taxon>Evosea</taxon>
        <taxon>Archamoebae</taxon>
        <taxon>Mastigamoebida</taxon>
        <taxon>Entamoebidae</taxon>
        <taxon>Entamoeba</taxon>
    </lineage>
</organism>
<gene>
    <name evidence="8" type="primary">hgl1</name>
    <name evidence="10" type="ORF">EHI_133900</name>
</gene>
<proteinExistence type="evidence at protein level"/>
<name>HGL1_ENTH1</name>
<evidence type="ECO:0000250" key="1">
    <source>
        <dbReference type="UniProtKB" id="P23502"/>
    </source>
</evidence>
<evidence type="ECO:0000255" key="2"/>
<evidence type="ECO:0000255" key="3">
    <source>
        <dbReference type="PROSITE-ProRule" id="PRU00498"/>
    </source>
</evidence>
<evidence type="ECO:0000269" key="4">
    <source>
    </source>
</evidence>
<evidence type="ECO:0000269" key="5">
    <source>
    </source>
</evidence>
<evidence type="ECO:0000303" key="6">
    <source>
    </source>
</evidence>
<evidence type="ECO:0000303" key="7">
    <source>
    </source>
</evidence>
<evidence type="ECO:0000303" key="8">
    <source>
    </source>
</evidence>
<evidence type="ECO:0000305" key="9"/>
<evidence type="ECO:0000312" key="10">
    <source>
        <dbReference type="EMBL" id="EDS89531.1"/>
    </source>
</evidence>
<evidence type="ECO:0000312" key="11">
    <source>
        <dbReference type="EMBL" id="M59850"/>
    </source>
</evidence>